<feature type="chain" id="PRO_1000074297" description="Probable tRNA sulfurtransferase">
    <location>
        <begin position="1"/>
        <end position="404"/>
    </location>
</feature>
<feature type="domain" description="THUMP" evidence="1">
    <location>
        <begin position="60"/>
        <end position="165"/>
    </location>
</feature>
<feature type="binding site" evidence="1">
    <location>
        <begin position="183"/>
        <end position="184"/>
    </location>
    <ligand>
        <name>ATP</name>
        <dbReference type="ChEBI" id="CHEBI:30616"/>
    </ligand>
</feature>
<feature type="binding site" evidence="1">
    <location>
        <begin position="208"/>
        <end position="209"/>
    </location>
    <ligand>
        <name>ATP</name>
        <dbReference type="ChEBI" id="CHEBI:30616"/>
    </ligand>
</feature>
<feature type="binding site" evidence="1">
    <location>
        <position position="265"/>
    </location>
    <ligand>
        <name>ATP</name>
        <dbReference type="ChEBI" id="CHEBI:30616"/>
    </ligand>
</feature>
<feature type="binding site" evidence="1">
    <location>
        <position position="287"/>
    </location>
    <ligand>
        <name>ATP</name>
        <dbReference type="ChEBI" id="CHEBI:30616"/>
    </ligand>
</feature>
<feature type="binding site" evidence="1">
    <location>
        <position position="296"/>
    </location>
    <ligand>
        <name>ATP</name>
        <dbReference type="ChEBI" id="CHEBI:30616"/>
    </ligand>
</feature>
<keyword id="KW-0067">ATP-binding</keyword>
<keyword id="KW-0963">Cytoplasm</keyword>
<keyword id="KW-0547">Nucleotide-binding</keyword>
<keyword id="KW-0694">RNA-binding</keyword>
<keyword id="KW-0784">Thiamine biosynthesis</keyword>
<keyword id="KW-0808">Transferase</keyword>
<keyword id="KW-0820">tRNA-binding</keyword>
<comment type="function">
    <text evidence="1">Catalyzes the ATP-dependent transfer of a sulfur to tRNA to produce 4-thiouridine in position 8 of tRNAs, which functions as a near-UV photosensor. Also catalyzes the transfer of sulfur to the sulfur carrier protein ThiS, forming ThiS-thiocarboxylate. This is a step in the synthesis of thiazole, in the thiamine biosynthesis pathway. The sulfur is donated as persulfide by IscS.</text>
</comment>
<comment type="catalytic activity">
    <reaction evidence="1">
        <text>[ThiI sulfur-carrier protein]-S-sulfanyl-L-cysteine + a uridine in tRNA + 2 reduced [2Fe-2S]-[ferredoxin] + ATP + H(+) = [ThiI sulfur-carrier protein]-L-cysteine + a 4-thiouridine in tRNA + 2 oxidized [2Fe-2S]-[ferredoxin] + AMP + diphosphate</text>
        <dbReference type="Rhea" id="RHEA:24176"/>
        <dbReference type="Rhea" id="RHEA-COMP:10000"/>
        <dbReference type="Rhea" id="RHEA-COMP:10001"/>
        <dbReference type="Rhea" id="RHEA-COMP:13337"/>
        <dbReference type="Rhea" id="RHEA-COMP:13338"/>
        <dbReference type="Rhea" id="RHEA-COMP:13339"/>
        <dbReference type="Rhea" id="RHEA-COMP:13340"/>
        <dbReference type="ChEBI" id="CHEBI:15378"/>
        <dbReference type="ChEBI" id="CHEBI:29950"/>
        <dbReference type="ChEBI" id="CHEBI:30616"/>
        <dbReference type="ChEBI" id="CHEBI:33019"/>
        <dbReference type="ChEBI" id="CHEBI:33737"/>
        <dbReference type="ChEBI" id="CHEBI:33738"/>
        <dbReference type="ChEBI" id="CHEBI:61963"/>
        <dbReference type="ChEBI" id="CHEBI:65315"/>
        <dbReference type="ChEBI" id="CHEBI:136798"/>
        <dbReference type="ChEBI" id="CHEBI:456215"/>
        <dbReference type="EC" id="2.8.1.4"/>
    </reaction>
</comment>
<comment type="catalytic activity">
    <reaction evidence="1">
        <text>[ThiS sulfur-carrier protein]-C-terminal Gly-Gly-AMP + S-sulfanyl-L-cysteinyl-[cysteine desulfurase] + AH2 = [ThiS sulfur-carrier protein]-C-terminal-Gly-aminoethanethioate + L-cysteinyl-[cysteine desulfurase] + A + AMP + 2 H(+)</text>
        <dbReference type="Rhea" id="RHEA:43340"/>
        <dbReference type="Rhea" id="RHEA-COMP:12157"/>
        <dbReference type="Rhea" id="RHEA-COMP:12158"/>
        <dbReference type="Rhea" id="RHEA-COMP:12910"/>
        <dbReference type="Rhea" id="RHEA-COMP:19908"/>
        <dbReference type="ChEBI" id="CHEBI:13193"/>
        <dbReference type="ChEBI" id="CHEBI:15378"/>
        <dbReference type="ChEBI" id="CHEBI:17499"/>
        <dbReference type="ChEBI" id="CHEBI:29950"/>
        <dbReference type="ChEBI" id="CHEBI:61963"/>
        <dbReference type="ChEBI" id="CHEBI:90618"/>
        <dbReference type="ChEBI" id="CHEBI:232372"/>
        <dbReference type="ChEBI" id="CHEBI:456215"/>
    </reaction>
</comment>
<comment type="pathway">
    <text evidence="1">Cofactor biosynthesis; thiamine diphosphate biosynthesis.</text>
</comment>
<comment type="subcellular location">
    <subcellularLocation>
        <location evidence="1">Cytoplasm</location>
    </subcellularLocation>
</comment>
<comment type="similarity">
    <text evidence="1">Belongs to the ThiI family.</text>
</comment>
<dbReference type="EC" id="2.8.1.4" evidence="1"/>
<dbReference type="EMBL" id="CP000260">
    <property type="protein sequence ID" value="ABF33752.1"/>
    <property type="molecule type" value="Genomic_DNA"/>
</dbReference>
<dbReference type="SMR" id="Q1JHI4"/>
<dbReference type="KEGG" id="sph:MGAS10270_Spy0687"/>
<dbReference type="HOGENOM" id="CLU_037952_4_0_9"/>
<dbReference type="UniPathway" id="UPA00060"/>
<dbReference type="Proteomes" id="UP000002436">
    <property type="component" value="Chromosome"/>
</dbReference>
<dbReference type="GO" id="GO:0005829">
    <property type="term" value="C:cytosol"/>
    <property type="evidence" value="ECO:0007669"/>
    <property type="project" value="TreeGrafter"/>
</dbReference>
<dbReference type="GO" id="GO:0005524">
    <property type="term" value="F:ATP binding"/>
    <property type="evidence" value="ECO:0007669"/>
    <property type="project" value="UniProtKB-UniRule"/>
</dbReference>
<dbReference type="GO" id="GO:0004810">
    <property type="term" value="F:CCA tRNA nucleotidyltransferase activity"/>
    <property type="evidence" value="ECO:0007669"/>
    <property type="project" value="InterPro"/>
</dbReference>
<dbReference type="GO" id="GO:0000049">
    <property type="term" value="F:tRNA binding"/>
    <property type="evidence" value="ECO:0007669"/>
    <property type="project" value="UniProtKB-UniRule"/>
</dbReference>
<dbReference type="GO" id="GO:0140741">
    <property type="term" value="F:tRNA-uracil-4 sulfurtransferase activity"/>
    <property type="evidence" value="ECO:0007669"/>
    <property type="project" value="UniProtKB-EC"/>
</dbReference>
<dbReference type="GO" id="GO:0009228">
    <property type="term" value="P:thiamine biosynthetic process"/>
    <property type="evidence" value="ECO:0007669"/>
    <property type="project" value="UniProtKB-KW"/>
</dbReference>
<dbReference type="GO" id="GO:0009229">
    <property type="term" value="P:thiamine diphosphate biosynthetic process"/>
    <property type="evidence" value="ECO:0007669"/>
    <property type="project" value="UniProtKB-UniRule"/>
</dbReference>
<dbReference type="GO" id="GO:0052837">
    <property type="term" value="P:thiazole biosynthetic process"/>
    <property type="evidence" value="ECO:0007669"/>
    <property type="project" value="TreeGrafter"/>
</dbReference>
<dbReference type="GO" id="GO:0002937">
    <property type="term" value="P:tRNA 4-thiouridine biosynthesis"/>
    <property type="evidence" value="ECO:0007669"/>
    <property type="project" value="TreeGrafter"/>
</dbReference>
<dbReference type="CDD" id="cd01712">
    <property type="entry name" value="PPase_ThiI"/>
    <property type="match status" value="1"/>
</dbReference>
<dbReference type="CDD" id="cd11716">
    <property type="entry name" value="THUMP_ThiI"/>
    <property type="match status" value="1"/>
</dbReference>
<dbReference type="FunFam" id="3.40.50.620:FF:000053">
    <property type="entry name" value="Probable tRNA sulfurtransferase"/>
    <property type="match status" value="1"/>
</dbReference>
<dbReference type="Gene3D" id="3.30.2130.30">
    <property type="match status" value="1"/>
</dbReference>
<dbReference type="Gene3D" id="3.40.50.620">
    <property type="entry name" value="HUPs"/>
    <property type="match status" value="1"/>
</dbReference>
<dbReference type="HAMAP" id="MF_00021">
    <property type="entry name" value="ThiI"/>
    <property type="match status" value="1"/>
</dbReference>
<dbReference type="InterPro" id="IPR014729">
    <property type="entry name" value="Rossmann-like_a/b/a_fold"/>
</dbReference>
<dbReference type="InterPro" id="IPR020536">
    <property type="entry name" value="ThiI_AANH"/>
</dbReference>
<dbReference type="InterPro" id="IPR054173">
    <property type="entry name" value="ThiI_fer"/>
</dbReference>
<dbReference type="InterPro" id="IPR049961">
    <property type="entry name" value="ThiI_N"/>
</dbReference>
<dbReference type="InterPro" id="IPR004114">
    <property type="entry name" value="THUMP_dom"/>
</dbReference>
<dbReference type="InterPro" id="IPR049962">
    <property type="entry name" value="THUMP_ThiI"/>
</dbReference>
<dbReference type="InterPro" id="IPR003720">
    <property type="entry name" value="tRNA_STrfase"/>
</dbReference>
<dbReference type="InterPro" id="IPR050102">
    <property type="entry name" value="tRNA_sulfurtransferase_ThiI"/>
</dbReference>
<dbReference type="NCBIfam" id="TIGR00342">
    <property type="entry name" value="tRNA uracil 4-sulfurtransferase ThiI"/>
    <property type="match status" value="1"/>
</dbReference>
<dbReference type="PANTHER" id="PTHR43209">
    <property type="entry name" value="TRNA SULFURTRANSFERASE"/>
    <property type="match status" value="1"/>
</dbReference>
<dbReference type="PANTHER" id="PTHR43209:SF1">
    <property type="entry name" value="TRNA SULFURTRANSFERASE"/>
    <property type="match status" value="1"/>
</dbReference>
<dbReference type="Pfam" id="PF02568">
    <property type="entry name" value="ThiI"/>
    <property type="match status" value="1"/>
</dbReference>
<dbReference type="Pfam" id="PF22025">
    <property type="entry name" value="ThiI_fer"/>
    <property type="match status" value="1"/>
</dbReference>
<dbReference type="Pfam" id="PF02926">
    <property type="entry name" value="THUMP"/>
    <property type="match status" value="1"/>
</dbReference>
<dbReference type="SMART" id="SM00981">
    <property type="entry name" value="THUMP"/>
    <property type="match status" value="1"/>
</dbReference>
<dbReference type="SUPFAM" id="SSF52402">
    <property type="entry name" value="Adenine nucleotide alpha hydrolases-like"/>
    <property type="match status" value="1"/>
</dbReference>
<dbReference type="SUPFAM" id="SSF143437">
    <property type="entry name" value="THUMP domain-like"/>
    <property type="match status" value="1"/>
</dbReference>
<dbReference type="PROSITE" id="PS51165">
    <property type="entry name" value="THUMP"/>
    <property type="match status" value="1"/>
</dbReference>
<gene>
    <name evidence="1" type="primary">thiI</name>
    <name type="ordered locus">MGAS10270_Spy0687</name>
</gene>
<organism>
    <name type="scientific">Streptococcus pyogenes serotype M2 (strain MGAS10270)</name>
    <dbReference type="NCBI Taxonomy" id="370552"/>
    <lineage>
        <taxon>Bacteria</taxon>
        <taxon>Bacillati</taxon>
        <taxon>Bacillota</taxon>
        <taxon>Bacilli</taxon>
        <taxon>Lactobacillales</taxon>
        <taxon>Streptococcaceae</taxon>
        <taxon>Streptococcus</taxon>
    </lineage>
</organism>
<sequence length="404" mass="44798">MDYSEIMVRHGELSTKGKNRMRFINKLKNNIQDVLAPFPAITVRSDRDRTHVSLNGTDYQPIVEALKLVFGVQALSPVYKLEKSVPLLVTAVQDIMTSLYRDGLTFKIATKRSDHAFELDSRELNSLLGGAVFEVLPNIQAQMKHPDVTLKVEIRDEAAYISYEEIKGAGGLPVGTSGKGMLMLSGGIDSPVAGYLALKRGLDIEVVHFASPPYTSPGALAKAQDLTRRLTRFGGNIQFIEVPFTEIQEEIKNKAPEAYLMTLTRRFMMRITDAIREQRKGLVIVNGESLGQVASQTLESMQAINAVTSTPIIRPVVTMDKLEIIEMAQAIDTFDISIQPFEDCCTIFAPDRPKTNPKLGNAEKYEERFDIDGLVQRAVSGIIVTEITPEIVNDEVENLIDALL</sequence>
<proteinExistence type="inferred from homology"/>
<evidence type="ECO:0000255" key="1">
    <source>
        <dbReference type="HAMAP-Rule" id="MF_00021"/>
    </source>
</evidence>
<reference key="1">
    <citation type="journal article" date="2006" name="Proc. Natl. Acad. Sci. U.S.A.">
        <title>Molecular genetic anatomy of inter- and intraserotype variation in the human bacterial pathogen group A Streptococcus.</title>
        <authorList>
            <person name="Beres S.B."/>
            <person name="Richter E.W."/>
            <person name="Nagiec M.J."/>
            <person name="Sumby P."/>
            <person name="Porcella S.F."/>
            <person name="DeLeo F.R."/>
            <person name="Musser J.M."/>
        </authorList>
    </citation>
    <scope>NUCLEOTIDE SEQUENCE [LARGE SCALE GENOMIC DNA]</scope>
    <source>
        <strain>MGAS10270</strain>
    </source>
</reference>
<protein>
    <recommendedName>
        <fullName evidence="1">Probable tRNA sulfurtransferase</fullName>
        <ecNumber evidence="1">2.8.1.4</ecNumber>
    </recommendedName>
    <alternativeName>
        <fullName evidence="1">Sulfur carrier protein ThiS sulfurtransferase</fullName>
    </alternativeName>
    <alternativeName>
        <fullName evidence="1">Thiamine biosynthesis protein ThiI</fullName>
    </alternativeName>
    <alternativeName>
        <fullName evidence="1">tRNA 4-thiouridine synthase</fullName>
    </alternativeName>
</protein>
<accession>Q1JHI4</accession>
<name>THII_STRPD</name>